<accession>Q508K7</accession>
<name>CYB_CHAAD</name>
<feature type="chain" id="PRO_0000254995" description="Cytochrome b">
    <location>
        <begin position="1"/>
        <end position="379"/>
    </location>
</feature>
<feature type="transmembrane region" description="Helical" evidence="2">
    <location>
        <begin position="33"/>
        <end position="53"/>
    </location>
</feature>
<feature type="transmembrane region" description="Helical" evidence="2">
    <location>
        <begin position="77"/>
        <end position="98"/>
    </location>
</feature>
<feature type="transmembrane region" description="Helical" evidence="2">
    <location>
        <begin position="113"/>
        <end position="133"/>
    </location>
</feature>
<feature type="transmembrane region" description="Helical" evidence="2">
    <location>
        <begin position="178"/>
        <end position="198"/>
    </location>
</feature>
<feature type="transmembrane region" description="Helical" evidence="2">
    <location>
        <begin position="226"/>
        <end position="246"/>
    </location>
</feature>
<feature type="transmembrane region" description="Helical" evidence="2">
    <location>
        <begin position="288"/>
        <end position="308"/>
    </location>
</feature>
<feature type="transmembrane region" description="Helical" evidence="2">
    <location>
        <begin position="320"/>
        <end position="340"/>
    </location>
</feature>
<feature type="transmembrane region" description="Helical" evidence="2">
    <location>
        <begin position="347"/>
        <end position="367"/>
    </location>
</feature>
<feature type="binding site" description="axial binding residue" evidence="2">
    <location>
        <position position="83"/>
    </location>
    <ligand>
        <name>heme b</name>
        <dbReference type="ChEBI" id="CHEBI:60344"/>
        <label>b562</label>
    </ligand>
    <ligandPart>
        <name>Fe</name>
        <dbReference type="ChEBI" id="CHEBI:18248"/>
    </ligandPart>
</feature>
<feature type="binding site" description="axial binding residue" evidence="2">
    <location>
        <position position="97"/>
    </location>
    <ligand>
        <name>heme b</name>
        <dbReference type="ChEBI" id="CHEBI:60344"/>
        <label>b566</label>
    </ligand>
    <ligandPart>
        <name>Fe</name>
        <dbReference type="ChEBI" id="CHEBI:18248"/>
    </ligandPart>
</feature>
<feature type="binding site" description="axial binding residue" evidence="2">
    <location>
        <position position="182"/>
    </location>
    <ligand>
        <name>heme b</name>
        <dbReference type="ChEBI" id="CHEBI:60344"/>
        <label>b562</label>
    </ligand>
    <ligandPart>
        <name>Fe</name>
        <dbReference type="ChEBI" id="CHEBI:18248"/>
    </ligandPart>
</feature>
<feature type="binding site" description="axial binding residue" evidence="2">
    <location>
        <position position="196"/>
    </location>
    <ligand>
        <name>heme b</name>
        <dbReference type="ChEBI" id="CHEBI:60344"/>
        <label>b566</label>
    </ligand>
    <ligandPart>
        <name>Fe</name>
        <dbReference type="ChEBI" id="CHEBI:18248"/>
    </ligandPart>
</feature>
<feature type="binding site" evidence="2">
    <location>
        <position position="201"/>
    </location>
    <ligand>
        <name>a ubiquinone</name>
        <dbReference type="ChEBI" id="CHEBI:16389"/>
    </ligand>
</feature>
<keyword id="KW-0249">Electron transport</keyword>
<keyword id="KW-0349">Heme</keyword>
<keyword id="KW-0408">Iron</keyword>
<keyword id="KW-0472">Membrane</keyword>
<keyword id="KW-0479">Metal-binding</keyword>
<keyword id="KW-0496">Mitochondrion</keyword>
<keyword id="KW-0999">Mitochondrion inner membrane</keyword>
<keyword id="KW-0679">Respiratory chain</keyword>
<keyword id="KW-0812">Transmembrane</keyword>
<keyword id="KW-1133">Transmembrane helix</keyword>
<keyword id="KW-0813">Transport</keyword>
<keyword id="KW-0830">Ubiquinone</keyword>
<protein>
    <recommendedName>
        <fullName>Cytochrome b</fullName>
    </recommendedName>
    <alternativeName>
        <fullName>Complex III subunit 3</fullName>
    </alternativeName>
    <alternativeName>
        <fullName>Complex III subunit III</fullName>
    </alternativeName>
    <alternativeName>
        <fullName>Cytochrome b-c1 complex subunit 3</fullName>
    </alternativeName>
    <alternativeName>
        <fullName>Ubiquinol-cytochrome-c reductase complex cytochrome b subunit</fullName>
    </alternativeName>
</protein>
<sequence length="379" mass="42709">MTIIRKSHPLMKMVNHAFIDLPAPSNISSWWNFGSLLGLCLIIQIASGLFLAMHYTSDTTSAFSSVAHICRDVNYGWLIRYIHANGASLFFICLYLHIGRGIYYGSYMYKETWNIGIVLLFLTMATAFMGYVLPWGQMSFWGATVITNLLSAIPYVGTSLVEWIWGGFSVDKATLTRFFAFHFILPFIIAATAMVHLLFLHETGSNNPLGIPSNSDKIPFHPYYTFKDLLGVIIILSLFLTFVLFFPDLLGDPDNYSQANPLNTPPHIKPEWYFLFAYAILRSIPNKLGGVIALVLSILVLALFPLLHTANQRSMMFRPISQLLFWALVSDLMILTWIGGQPVEPPFIIIGQIASILYFSIILLLLPIAGLIENKILKW</sequence>
<proteinExistence type="inferred from homology"/>
<geneLocation type="mitochondrion"/>
<comment type="function">
    <text evidence="2">Component of the ubiquinol-cytochrome c reductase complex (complex III or cytochrome b-c1 complex) that is part of the mitochondrial respiratory chain. The b-c1 complex mediates electron transfer from ubiquinol to cytochrome c. Contributes to the generation of a proton gradient across the mitochondrial membrane that is then used for ATP synthesis.</text>
</comment>
<comment type="cofactor">
    <cofactor evidence="2">
        <name>heme b</name>
        <dbReference type="ChEBI" id="CHEBI:60344"/>
    </cofactor>
    <text evidence="2">Binds 2 heme b groups non-covalently.</text>
</comment>
<comment type="subunit">
    <text evidence="2">The cytochrome bc1 complex contains 11 subunits: 3 respiratory subunits (MT-CYB, CYC1 and UQCRFS1), 2 core proteins (UQCRC1 and UQCRC2) and 6 low-molecular weight proteins (UQCRH/QCR6, UQCRB/QCR7, UQCRQ/QCR8, UQCR10/QCR9, UQCR11/QCR10 and a cleavage product of UQCRFS1). This cytochrome bc1 complex then forms a dimer.</text>
</comment>
<comment type="subcellular location">
    <subcellularLocation>
        <location evidence="2">Mitochondrion inner membrane</location>
        <topology evidence="2">Multi-pass membrane protein</topology>
    </subcellularLocation>
</comment>
<comment type="miscellaneous">
    <text evidence="1">Heme 1 (or BL or b562) is low-potential and absorbs at about 562 nm, and heme 2 (or BH or b566) is high-potential and absorbs at about 566 nm.</text>
</comment>
<comment type="similarity">
    <text evidence="3 4">Belongs to the cytochrome b family.</text>
</comment>
<comment type="caution">
    <text evidence="2">The full-length protein contains only eight transmembrane helices, not nine as predicted by bioinformatics tools.</text>
</comment>
<evidence type="ECO:0000250" key="1"/>
<evidence type="ECO:0000250" key="2">
    <source>
        <dbReference type="UniProtKB" id="P00157"/>
    </source>
</evidence>
<evidence type="ECO:0000255" key="3">
    <source>
        <dbReference type="PROSITE-ProRule" id="PRU00967"/>
    </source>
</evidence>
<evidence type="ECO:0000255" key="4">
    <source>
        <dbReference type="PROSITE-ProRule" id="PRU00968"/>
    </source>
</evidence>
<gene>
    <name type="primary">MT-CYB</name>
    <name type="synonym">COB</name>
    <name type="synonym">CYTB</name>
    <name type="synonym">MTCYB</name>
</gene>
<reference key="1">
    <citation type="journal article" date="2005" name="J. Mammal.">
        <title>Phylogenetics of the new world rodent family Heteromyidae.</title>
        <authorList>
            <person name="Alexander L.F."/>
            <person name="Riddle B.R."/>
        </authorList>
    </citation>
    <scope>NUCLEOTIDE SEQUENCE [GENOMIC DNA]</scope>
    <source>
        <strain>Isolate LVT 1270</strain>
    </source>
</reference>
<organism>
    <name type="scientific">Chaetodipus artus</name>
    <name type="common">Narrow-skulled pocket mouse</name>
    <dbReference type="NCBI Taxonomy" id="145406"/>
    <lineage>
        <taxon>Eukaryota</taxon>
        <taxon>Metazoa</taxon>
        <taxon>Chordata</taxon>
        <taxon>Craniata</taxon>
        <taxon>Vertebrata</taxon>
        <taxon>Euteleostomi</taxon>
        <taxon>Mammalia</taxon>
        <taxon>Eutheria</taxon>
        <taxon>Euarchontoglires</taxon>
        <taxon>Glires</taxon>
        <taxon>Rodentia</taxon>
        <taxon>Castorimorpha</taxon>
        <taxon>Heteromyidae</taxon>
        <taxon>Perognathinae</taxon>
        <taxon>Chaetodipus</taxon>
    </lineage>
</organism>
<dbReference type="EMBL" id="AY926396">
    <property type="protein sequence ID" value="AAY23239.1"/>
    <property type="molecule type" value="Genomic_DNA"/>
</dbReference>
<dbReference type="SMR" id="Q508K7"/>
<dbReference type="GO" id="GO:0005743">
    <property type="term" value="C:mitochondrial inner membrane"/>
    <property type="evidence" value="ECO:0007669"/>
    <property type="project" value="UniProtKB-SubCell"/>
</dbReference>
<dbReference type="GO" id="GO:0045275">
    <property type="term" value="C:respiratory chain complex III"/>
    <property type="evidence" value="ECO:0007669"/>
    <property type="project" value="InterPro"/>
</dbReference>
<dbReference type="GO" id="GO:0046872">
    <property type="term" value="F:metal ion binding"/>
    <property type="evidence" value="ECO:0007669"/>
    <property type="project" value="UniProtKB-KW"/>
</dbReference>
<dbReference type="GO" id="GO:0008121">
    <property type="term" value="F:ubiquinol-cytochrome-c reductase activity"/>
    <property type="evidence" value="ECO:0007669"/>
    <property type="project" value="InterPro"/>
</dbReference>
<dbReference type="GO" id="GO:0006122">
    <property type="term" value="P:mitochondrial electron transport, ubiquinol to cytochrome c"/>
    <property type="evidence" value="ECO:0007669"/>
    <property type="project" value="TreeGrafter"/>
</dbReference>
<dbReference type="CDD" id="cd00290">
    <property type="entry name" value="cytochrome_b_C"/>
    <property type="match status" value="1"/>
</dbReference>
<dbReference type="CDD" id="cd00284">
    <property type="entry name" value="Cytochrome_b_N"/>
    <property type="match status" value="1"/>
</dbReference>
<dbReference type="FunFam" id="1.20.810.10:FF:000002">
    <property type="entry name" value="Cytochrome b"/>
    <property type="match status" value="1"/>
</dbReference>
<dbReference type="Gene3D" id="1.20.810.10">
    <property type="entry name" value="Cytochrome Bc1 Complex, Chain C"/>
    <property type="match status" value="1"/>
</dbReference>
<dbReference type="InterPro" id="IPR005798">
    <property type="entry name" value="Cyt_b/b6_C"/>
</dbReference>
<dbReference type="InterPro" id="IPR036150">
    <property type="entry name" value="Cyt_b/b6_C_sf"/>
</dbReference>
<dbReference type="InterPro" id="IPR005797">
    <property type="entry name" value="Cyt_b/b6_N"/>
</dbReference>
<dbReference type="InterPro" id="IPR027387">
    <property type="entry name" value="Cytb/b6-like_sf"/>
</dbReference>
<dbReference type="InterPro" id="IPR030689">
    <property type="entry name" value="Cytochrome_b"/>
</dbReference>
<dbReference type="InterPro" id="IPR048260">
    <property type="entry name" value="Cytochrome_b_C_euk/bac"/>
</dbReference>
<dbReference type="InterPro" id="IPR048259">
    <property type="entry name" value="Cytochrome_b_N_euk/bac"/>
</dbReference>
<dbReference type="InterPro" id="IPR016174">
    <property type="entry name" value="Di-haem_cyt_TM"/>
</dbReference>
<dbReference type="PANTHER" id="PTHR19271">
    <property type="entry name" value="CYTOCHROME B"/>
    <property type="match status" value="1"/>
</dbReference>
<dbReference type="PANTHER" id="PTHR19271:SF16">
    <property type="entry name" value="CYTOCHROME B"/>
    <property type="match status" value="1"/>
</dbReference>
<dbReference type="Pfam" id="PF00032">
    <property type="entry name" value="Cytochrom_B_C"/>
    <property type="match status" value="1"/>
</dbReference>
<dbReference type="Pfam" id="PF00033">
    <property type="entry name" value="Cytochrome_B"/>
    <property type="match status" value="1"/>
</dbReference>
<dbReference type="PIRSF" id="PIRSF038885">
    <property type="entry name" value="COB"/>
    <property type="match status" value="1"/>
</dbReference>
<dbReference type="SUPFAM" id="SSF81648">
    <property type="entry name" value="a domain/subunit of cytochrome bc1 complex (Ubiquinol-cytochrome c reductase)"/>
    <property type="match status" value="1"/>
</dbReference>
<dbReference type="SUPFAM" id="SSF81342">
    <property type="entry name" value="Transmembrane di-heme cytochromes"/>
    <property type="match status" value="1"/>
</dbReference>
<dbReference type="PROSITE" id="PS51003">
    <property type="entry name" value="CYTB_CTER"/>
    <property type="match status" value="1"/>
</dbReference>
<dbReference type="PROSITE" id="PS51002">
    <property type="entry name" value="CYTB_NTER"/>
    <property type="match status" value="1"/>
</dbReference>